<proteinExistence type="inferred from homology"/>
<accession>P0DC01</accession>
<accession>Q8K7J4</accession>
<reference key="1">
    <citation type="journal article" date="2003" name="Genome Res.">
        <title>Genome sequence of an M3 strain of Streptococcus pyogenes reveals a large-scale genomic rearrangement in invasive strains and new insights into phage evolution.</title>
        <authorList>
            <person name="Nakagawa I."/>
            <person name="Kurokawa K."/>
            <person name="Yamashita A."/>
            <person name="Nakata M."/>
            <person name="Tomiyasu Y."/>
            <person name="Okahashi N."/>
            <person name="Kawabata S."/>
            <person name="Yamazaki K."/>
            <person name="Shiba T."/>
            <person name="Yasunaga T."/>
            <person name="Hayashi H."/>
            <person name="Hattori M."/>
            <person name="Hamada S."/>
        </authorList>
    </citation>
    <scope>NUCLEOTIDE SEQUENCE [LARGE SCALE GENOMIC DNA]</scope>
    <source>
        <strain>SSI-1</strain>
    </source>
</reference>
<keyword id="KW-0067">ATP-binding</keyword>
<keyword id="KW-0963">Cytoplasm</keyword>
<keyword id="KW-0418">Kinase</keyword>
<keyword id="KW-0460">Magnesium</keyword>
<keyword id="KW-0479">Metal-binding</keyword>
<keyword id="KW-0545">Nucleotide biosynthesis</keyword>
<keyword id="KW-0547">Nucleotide-binding</keyword>
<keyword id="KW-0808">Transferase</keyword>
<dbReference type="EC" id="2.7.6.1" evidence="1"/>
<dbReference type="EMBL" id="BA000034">
    <property type="protein sequence ID" value="BAC64078.1"/>
    <property type="molecule type" value="Genomic_DNA"/>
</dbReference>
<dbReference type="RefSeq" id="WP_011054478.1">
    <property type="nucleotide sequence ID" value="NC_004606.1"/>
</dbReference>
<dbReference type="SMR" id="P0DC01"/>
<dbReference type="KEGG" id="sps:SPs0983"/>
<dbReference type="HOGENOM" id="CLU_033546_2_0_9"/>
<dbReference type="UniPathway" id="UPA00087">
    <property type="reaction ID" value="UER00172"/>
</dbReference>
<dbReference type="GO" id="GO:0005737">
    <property type="term" value="C:cytoplasm"/>
    <property type="evidence" value="ECO:0007669"/>
    <property type="project" value="UniProtKB-SubCell"/>
</dbReference>
<dbReference type="GO" id="GO:0002189">
    <property type="term" value="C:ribose phosphate diphosphokinase complex"/>
    <property type="evidence" value="ECO:0007669"/>
    <property type="project" value="TreeGrafter"/>
</dbReference>
<dbReference type="GO" id="GO:0005524">
    <property type="term" value="F:ATP binding"/>
    <property type="evidence" value="ECO:0007669"/>
    <property type="project" value="UniProtKB-KW"/>
</dbReference>
<dbReference type="GO" id="GO:0016301">
    <property type="term" value="F:kinase activity"/>
    <property type="evidence" value="ECO:0007669"/>
    <property type="project" value="UniProtKB-KW"/>
</dbReference>
<dbReference type="GO" id="GO:0000287">
    <property type="term" value="F:magnesium ion binding"/>
    <property type="evidence" value="ECO:0007669"/>
    <property type="project" value="UniProtKB-UniRule"/>
</dbReference>
<dbReference type="GO" id="GO:0004749">
    <property type="term" value="F:ribose phosphate diphosphokinase activity"/>
    <property type="evidence" value="ECO:0007669"/>
    <property type="project" value="UniProtKB-UniRule"/>
</dbReference>
<dbReference type="GO" id="GO:0006015">
    <property type="term" value="P:5-phosphoribose 1-diphosphate biosynthetic process"/>
    <property type="evidence" value="ECO:0007669"/>
    <property type="project" value="UniProtKB-UniRule"/>
</dbReference>
<dbReference type="GO" id="GO:0006164">
    <property type="term" value="P:purine nucleotide biosynthetic process"/>
    <property type="evidence" value="ECO:0007669"/>
    <property type="project" value="TreeGrafter"/>
</dbReference>
<dbReference type="GO" id="GO:0009156">
    <property type="term" value="P:ribonucleoside monophosphate biosynthetic process"/>
    <property type="evidence" value="ECO:0007669"/>
    <property type="project" value="InterPro"/>
</dbReference>
<dbReference type="CDD" id="cd06223">
    <property type="entry name" value="PRTases_typeI"/>
    <property type="match status" value="1"/>
</dbReference>
<dbReference type="FunFam" id="3.40.50.2020:FF:000001">
    <property type="entry name" value="Ribose-phosphate pyrophosphokinase"/>
    <property type="match status" value="1"/>
</dbReference>
<dbReference type="Gene3D" id="3.40.50.2020">
    <property type="match status" value="2"/>
</dbReference>
<dbReference type="HAMAP" id="MF_00583_B">
    <property type="entry name" value="RibP_PPkinase_B"/>
    <property type="match status" value="1"/>
</dbReference>
<dbReference type="InterPro" id="IPR000842">
    <property type="entry name" value="PRib_PP_synth_CS"/>
</dbReference>
<dbReference type="InterPro" id="IPR029099">
    <property type="entry name" value="Pribosyltran_N"/>
</dbReference>
<dbReference type="InterPro" id="IPR000836">
    <property type="entry name" value="PRibTrfase_dom"/>
</dbReference>
<dbReference type="InterPro" id="IPR029057">
    <property type="entry name" value="PRTase-like"/>
</dbReference>
<dbReference type="InterPro" id="IPR005946">
    <property type="entry name" value="Rib-P_diPkinase"/>
</dbReference>
<dbReference type="InterPro" id="IPR037515">
    <property type="entry name" value="Rib-P_diPkinase_bac"/>
</dbReference>
<dbReference type="NCBIfam" id="NF002320">
    <property type="entry name" value="PRK01259.1"/>
    <property type="match status" value="1"/>
</dbReference>
<dbReference type="NCBIfam" id="NF002686">
    <property type="entry name" value="PRK02458.1"/>
    <property type="match status" value="1"/>
</dbReference>
<dbReference type="NCBIfam" id="TIGR01251">
    <property type="entry name" value="ribP_PPkin"/>
    <property type="match status" value="1"/>
</dbReference>
<dbReference type="PANTHER" id="PTHR10210">
    <property type="entry name" value="RIBOSE-PHOSPHATE DIPHOSPHOKINASE FAMILY MEMBER"/>
    <property type="match status" value="1"/>
</dbReference>
<dbReference type="PANTHER" id="PTHR10210:SF41">
    <property type="entry name" value="RIBOSE-PHOSPHATE PYROPHOSPHOKINASE 1, CHLOROPLASTIC"/>
    <property type="match status" value="1"/>
</dbReference>
<dbReference type="Pfam" id="PF14572">
    <property type="entry name" value="Pribosyl_synth"/>
    <property type="match status" value="1"/>
</dbReference>
<dbReference type="Pfam" id="PF13793">
    <property type="entry name" value="Pribosyltran_N"/>
    <property type="match status" value="1"/>
</dbReference>
<dbReference type="SMART" id="SM01400">
    <property type="entry name" value="Pribosyltran_N"/>
    <property type="match status" value="1"/>
</dbReference>
<dbReference type="SUPFAM" id="SSF53271">
    <property type="entry name" value="PRTase-like"/>
    <property type="match status" value="2"/>
</dbReference>
<dbReference type="PROSITE" id="PS00114">
    <property type="entry name" value="PRPP_SYNTHASE"/>
    <property type="match status" value="1"/>
</dbReference>
<sequence>MTERYADKQIKLFSLTSNLPIAEKIAKAAGIPLGKMSSRQFSDGEIMINIEETVRGDDIYIIQSTSFPVNDNLWELLIMIDACQRASANTVNIVLPYFGYSRQDRVAKPREPITAKLVANMLTKAGIDRVVTLDLHAVQVQGFFDIPVDNLFTVPLFAERYSKLGLSGSDVVVVSPKNSGIKRARSLAEYLDSPIAIIDYAQDDSEREQGYIIGDVSGKKAILIDDILNTGKTFAEAAKILERSGATDTYAVASHGLFAGGAAEVLETAPIKEIIVTDSVKTKNRVPENVTYLSASDLIAEAIIRIHERRPLSPLFSYQPKGKNNA</sequence>
<feature type="chain" id="PRO_0000411388" description="Putative ribose-phosphate pyrophosphokinase 2">
    <location>
        <begin position="1"/>
        <end position="326"/>
    </location>
</feature>
<feature type="binding site" evidence="1">
    <location>
        <begin position="43"/>
        <end position="45"/>
    </location>
    <ligand>
        <name>ATP</name>
        <dbReference type="ChEBI" id="CHEBI:30616"/>
    </ligand>
</feature>
<feature type="binding site" evidence="1">
    <location>
        <begin position="102"/>
        <end position="103"/>
    </location>
    <ligand>
        <name>ATP</name>
        <dbReference type="ChEBI" id="CHEBI:30616"/>
    </ligand>
</feature>
<feature type="binding site" evidence="1">
    <location>
        <position position="136"/>
    </location>
    <ligand>
        <name>Mg(2+)</name>
        <dbReference type="ChEBI" id="CHEBI:18420"/>
    </ligand>
</feature>
<feature type="binding site" evidence="1">
    <location>
        <position position="225"/>
    </location>
    <ligand>
        <name>D-ribose 5-phosphate</name>
        <dbReference type="ChEBI" id="CHEBI:78346"/>
    </ligand>
</feature>
<feature type="binding site" evidence="1">
    <location>
        <begin position="229"/>
        <end position="233"/>
    </location>
    <ligand>
        <name>D-ribose 5-phosphate</name>
        <dbReference type="ChEBI" id="CHEBI:78346"/>
    </ligand>
</feature>
<gene>
    <name evidence="1" type="primary">prs2</name>
    <name type="ordered locus">SPs0983</name>
</gene>
<name>KPRS2_STRPQ</name>
<protein>
    <recommendedName>
        <fullName evidence="1">Putative ribose-phosphate pyrophosphokinase 2</fullName>
        <shortName evidence="1">RPPK 2</shortName>
        <ecNumber evidence="1">2.7.6.1</ecNumber>
    </recommendedName>
    <alternativeName>
        <fullName evidence="1">5-phospho-D-ribosyl alpha-1-diphosphate synthase 2</fullName>
    </alternativeName>
    <alternativeName>
        <fullName evidence="1">Phosphoribosyl diphosphate synthase 2</fullName>
    </alternativeName>
    <alternativeName>
        <fullName evidence="1">Phosphoribosyl pyrophosphate synthase 2</fullName>
        <shortName evidence="1">P-Rib-PP synthase 2</shortName>
        <shortName evidence="1">PRPP synthase 2</shortName>
        <shortName evidence="1">PRPPase 2</shortName>
    </alternativeName>
</protein>
<evidence type="ECO:0000255" key="1">
    <source>
        <dbReference type="HAMAP-Rule" id="MF_00583"/>
    </source>
</evidence>
<comment type="function">
    <text evidence="1">Involved in the biosynthesis of the central metabolite phospho-alpha-D-ribosyl-1-pyrophosphate (PRPP) via the transfer of pyrophosphoryl group from ATP to 1-hydroxyl of ribose-5-phosphate (Rib-5-P).</text>
</comment>
<comment type="catalytic activity">
    <reaction evidence="1">
        <text>D-ribose 5-phosphate + ATP = 5-phospho-alpha-D-ribose 1-diphosphate + AMP + H(+)</text>
        <dbReference type="Rhea" id="RHEA:15609"/>
        <dbReference type="ChEBI" id="CHEBI:15378"/>
        <dbReference type="ChEBI" id="CHEBI:30616"/>
        <dbReference type="ChEBI" id="CHEBI:58017"/>
        <dbReference type="ChEBI" id="CHEBI:78346"/>
        <dbReference type="ChEBI" id="CHEBI:456215"/>
        <dbReference type="EC" id="2.7.6.1"/>
    </reaction>
</comment>
<comment type="cofactor">
    <cofactor evidence="1">
        <name>Mg(2+)</name>
        <dbReference type="ChEBI" id="CHEBI:18420"/>
    </cofactor>
    <text evidence="1">Binds 1 Mg(2+) ion per subunit.</text>
</comment>
<comment type="pathway">
    <text evidence="1">Metabolic intermediate biosynthesis; 5-phospho-alpha-D-ribose 1-diphosphate biosynthesis; 5-phospho-alpha-D-ribose 1-diphosphate from D-ribose 5-phosphate (route I): step 1/1.</text>
</comment>
<comment type="subunit">
    <text evidence="1">Homohexamer.</text>
</comment>
<comment type="subcellular location">
    <subcellularLocation>
        <location evidence="1">Cytoplasm</location>
    </subcellularLocation>
</comment>
<comment type="similarity">
    <text evidence="1">Belongs to the ribose-phosphate pyrophosphokinase family. Class I subfamily.</text>
</comment>
<comment type="caution">
    <text evidence="1">Part of a set of proteins in which some residues (ACT_SITE, NP_BIND, REGION and BINDING) are not conserved.</text>
</comment>
<organism>
    <name type="scientific">Streptococcus pyogenes serotype M3 (strain SSI-1)</name>
    <dbReference type="NCBI Taxonomy" id="193567"/>
    <lineage>
        <taxon>Bacteria</taxon>
        <taxon>Bacillati</taxon>
        <taxon>Bacillota</taxon>
        <taxon>Bacilli</taxon>
        <taxon>Lactobacillales</taxon>
        <taxon>Streptococcaceae</taxon>
        <taxon>Streptococcus</taxon>
    </lineage>
</organism>